<feature type="chain" id="PRO_0000081407" description="Response regulator mcs4">
    <location>
        <begin position="1"/>
        <end position="522"/>
    </location>
</feature>
<feature type="domain" description="Response regulatory" evidence="1">
    <location>
        <begin position="363"/>
        <end position="505"/>
    </location>
</feature>
<feature type="region of interest" description="Disordered" evidence="2">
    <location>
        <begin position="148"/>
        <end position="274"/>
    </location>
</feature>
<feature type="compositionally biased region" description="Polar residues" evidence="2">
    <location>
        <begin position="174"/>
        <end position="194"/>
    </location>
</feature>
<feature type="compositionally biased region" description="Basic and acidic residues" evidence="2">
    <location>
        <begin position="244"/>
        <end position="255"/>
    </location>
</feature>
<feature type="compositionally biased region" description="Polar residues" evidence="2">
    <location>
        <begin position="260"/>
        <end position="274"/>
    </location>
</feature>
<feature type="modified residue" description="4-aspartylphosphate" evidence="4">
    <location>
        <position position="412"/>
    </location>
</feature>
<sequence length="522" mass="57240">MRIWFKKVPDGITSSVILSEDHLVDDLKDAIARKFPIRISQYYDAPELSIRVVAPPNASSELQSRELSPNESILFVMETYYPHGQDFNDALLVASPDTSVALRYRSSQLSSSTFESTPPVFSEYPPNIIPTPANETVPRIKQPSIALDSLESPVSAPSRHQSTYSYKGGPLNYNLRNASRTRSHQTLPSSNVNKTGVLLLPRSSRQQTLASRPSLPDLTSADKSQPSDEAESITRKNSIGMSTRSDESTAEKLAKAEVATPTNSRSISHSSLYTKQSGTAGVLPAVNADIDAANRMNPDISSQFPIADNKDPLNADTQAHLGFPSNQIDGIVGTSPVNVLTSPGIGAKAPFASLLEGVIPPINVLIVEDNIINQKILETFMKKRNISSEVAKDGLEALEKWKKKSFHLILMDIQLPTMSGIEVTQEIRRLERLNAIGVGAPKLTQPIPEKDQLNENKFQSPVIIVALTASSLMADRNEALAAGCNDFLTKPVSLVWLEKKITEWGCMQALIDWNGWCRFRGR</sequence>
<keyword id="KW-0963">Cytoplasm</keyword>
<keyword id="KW-0597">Phosphoprotein</keyword>
<keyword id="KW-1185">Reference proteome</keyword>
<keyword id="KW-0902">Two-component regulatory system</keyword>
<name>MCS4_SCHPO</name>
<reference key="1">
    <citation type="journal article" date="1997" name="Genetics">
        <title>Mcs4, a two-component system response regulator homologue, regulates the Schizosaccharomyces pombe cell cycle control.</title>
        <authorList>
            <person name="Cottarel G."/>
        </authorList>
    </citation>
    <scope>NUCLEOTIDE SEQUENCE [GENOMIC DNA]</scope>
</reference>
<reference key="2">
    <citation type="journal article" date="1997" name="Genes Dev.">
        <title>The Mcs4 response regulator coordinately controls the stress-activated Wak1-Wis1-Sty1 MAP kinase pathway and fission yeast cell cycle.</title>
        <authorList>
            <person name="Shieh J.C."/>
            <person name="Wilkinson M.G."/>
            <person name="Buck V."/>
            <person name="Morgan B.A."/>
            <person name="Makino K."/>
            <person name="Millar J.B.A."/>
        </authorList>
    </citation>
    <scope>NUCLEOTIDE SEQUENCE [GENOMIC DNA]</scope>
    <source>
        <strain>972 / ATCC 24843</strain>
    </source>
</reference>
<reference key="3">
    <citation type="journal article" date="2002" name="Nature">
        <title>The genome sequence of Schizosaccharomyces pombe.</title>
        <authorList>
            <person name="Wood V."/>
            <person name="Gwilliam R."/>
            <person name="Rajandream M.A."/>
            <person name="Lyne M.H."/>
            <person name="Lyne R."/>
            <person name="Stewart A."/>
            <person name="Sgouros J.G."/>
            <person name="Peat N."/>
            <person name="Hayles J."/>
            <person name="Baker S.G."/>
            <person name="Basham D."/>
            <person name="Bowman S."/>
            <person name="Brooks K."/>
            <person name="Brown D."/>
            <person name="Brown S."/>
            <person name="Chillingworth T."/>
            <person name="Churcher C.M."/>
            <person name="Collins M."/>
            <person name="Connor R."/>
            <person name="Cronin A."/>
            <person name="Davis P."/>
            <person name="Feltwell T."/>
            <person name="Fraser A."/>
            <person name="Gentles S."/>
            <person name="Goble A."/>
            <person name="Hamlin N."/>
            <person name="Harris D.E."/>
            <person name="Hidalgo J."/>
            <person name="Hodgson G."/>
            <person name="Holroyd S."/>
            <person name="Hornsby T."/>
            <person name="Howarth S."/>
            <person name="Huckle E.J."/>
            <person name="Hunt S."/>
            <person name="Jagels K."/>
            <person name="James K.D."/>
            <person name="Jones L."/>
            <person name="Jones M."/>
            <person name="Leather S."/>
            <person name="McDonald S."/>
            <person name="McLean J."/>
            <person name="Mooney P."/>
            <person name="Moule S."/>
            <person name="Mungall K.L."/>
            <person name="Murphy L.D."/>
            <person name="Niblett D."/>
            <person name="Odell C."/>
            <person name="Oliver K."/>
            <person name="O'Neil S."/>
            <person name="Pearson D."/>
            <person name="Quail M.A."/>
            <person name="Rabbinowitsch E."/>
            <person name="Rutherford K.M."/>
            <person name="Rutter S."/>
            <person name="Saunders D."/>
            <person name="Seeger K."/>
            <person name="Sharp S."/>
            <person name="Skelton J."/>
            <person name="Simmonds M.N."/>
            <person name="Squares R."/>
            <person name="Squares S."/>
            <person name="Stevens K."/>
            <person name="Taylor K."/>
            <person name="Taylor R.G."/>
            <person name="Tivey A."/>
            <person name="Walsh S.V."/>
            <person name="Warren T."/>
            <person name="Whitehead S."/>
            <person name="Woodward J.R."/>
            <person name="Volckaert G."/>
            <person name="Aert R."/>
            <person name="Robben J."/>
            <person name="Grymonprez B."/>
            <person name="Weltjens I."/>
            <person name="Vanstreels E."/>
            <person name="Rieger M."/>
            <person name="Schaefer M."/>
            <person name="Mueller-Auer S."/>
            <person name="Gabel C."/>
            <person name="Fuchs M."/>
            <person name="Duesterhoeft A."/>
            <person name="Fritzc C."/>
            <person name="Holzer E."/>
            <person name="Moestl D."/>
            <person name="Hilbert H."/>
            <person name="Borzym K."/>
            <person name="Langer I."/>
            <person name="Beck A."/>
            <person name="Lehrach H."/>
            <person name="Reinhardt R."/>
            <person name="Pohl T.M."/>
            <person name="Eger P."/>
            <person name="Zimmermann W."/>
            <person name="Wedler H."/>
            <person name="Wambutt R."/>
            <person name="Purnelle B."/>
            <person name="Goffeau A."/>
            <person name="Cadieu E."/>
            <person name="Dreano S."/>
            <person name="Gloux S."/>
            <person name="Lelaure V."/>
            <person name="Mottier S."/>
            <person name="Galibert F."/>
            <person name="Aves S.J."/>
            <person name="Xiang Z."/>
            <person name="Hunt C."/>
            <person name="Moore K."/>
            <person name="Hurst S.M."/>
            <person name="Lucas M."/>
            <person name="Rochet M."/>
            <person name="Gaillardin C."/>
            <person name="Tallada V.A."/>
            <person name="Garzon A."/>
            <person name="Thode G."/>
            <person name="Daga R.R."/>
            <person name="Cruzado L."/>
            <person name="Jimenez J."/>
            <person name="Sanchez M."/>
            <person name="del Rey F."/>
            <person name="Benito J."/>
            <person name="Dominguez A."/>
            <person name="Revuelta J.L."/>
            <person name="Moreno S."/>
            <person name="Armstrong J."/>
            <person name="Forsburg S.L."/>
            <person name="Cerutti L."/>
            <person name="Lowe T."/>
            <person name="McCombie W.R."/>
            <person name="Paulsen I."/>
            <person name="Potashkin J."/>
            <person name="Shpakovski G.V."/>
            <person name="Ussery D."/>
            <person name="Barrell B.G."/>
            <person name="Nurse P."/>
        </authorList>
    </citation>
    <scope>NUCLEOTIDE SEQUENCE [LARGE SCALE GENOMIC DNA]</scope>
    <source>
        <strain>972 / ATCC 24843</strain>
    </source>
</reference>
<reference key="4">
    <citation type="journal article" date="2000" name="Genes Cells">
        <title>Large-scale screening of intracellular protein localization in living fission yeast cells by the use of a GFP-fusion genomic DNA library.</title>
        <authorList>
            <person name="Ding D.-Q."/>
            <person name="Tomita Y."/>
            <person name="Yamamoto A."/>
            <person name="Chikashige Y."/>
            <person name="Haraguchi T."/>
            <person name="Hiraoka Y."/>
        </authorList>
    </citation>
    <scope>NUCLEOTIDE SEQUENCE [LARGE SCALE GENOMIC DNA] OF 4-217</scope>
    <source>
        <strain>ATCC 38364 / 968</strain>
    </source>
</reference>
<reference key="5">
    <citation type="journal article" date="2006" name="Nat. Biotechnol.">
        <title>ORFeome cloning and global analysis of protein localization in the fission yeast Schizosaccharomyces pombe.</title>
        <authorList>
            <person name="Matsuyama A."/>
            <person name="Arai R."/>
            <person name="Yashiroda Y."/>
            <person name="Shirai A."/>
            <person name="Kamata A."/>
            <person name="Sekido S."/>
            <person name="Kobayashi Y."/>
            <person name="Hashimoto A."/>
            <person name="Hamamoto M."/>
            <person name="Hiraoka Y."/>
            <person name="Horinouchi S."/>
            <person name="Yoshida M."/>
        </authorList>
    </citation>
    <scope>SUBCELLULAR LOCATION [LARGE SCALE ANALYSIS]</scope>
</reference>
<dbReference type="EMBL" id="AF004694">
    <property type="protein sequence ID" value="AAB88257.1"/>
    <property type="molecule type" value="Genomic_DNA"/>
</dbReference>
<dbReference type="EMBL" id="Y11927">
    <property type="protein sequence ID" value="CAA72678.1"/>
    <property type="molecule type" value="Genomic_DNA"/>
</dbReference>
<dbReference type="EMBL" id="CU329671">
    <property type="protein sequence ID" value="CAA21895.1"/>
    <property type="molecule type" value="Genomic_DNA"/>
</dbReference>
<dbReference type="EMBL" id="AB027909">
    <property type="protein sequence ID" value="BAA87213.1"/>
    <property type="molecule type" value="Genomic_DNA"/>
</dbReference>
<dbReference type="PIR" id="T43417">
    <property type="entry name" value="T43417"/>
</dbReference>
<dbReference type="RefSeq" id="NP_596484.1">
    <property type="nucleotide sequence ID" value="NM_001022404.2"/>
</dbReference>
<dbReference type="SMR" id="P87323"/>
<dbReference type="BioGRID" id="277723">
    <property type="interactions" value="25"/>
</dbReference>
<dbReference type="FunCoup" id="P87323">
    <property type="interactions" value="80"/>
</dbReference>
<dbReference type="IntAct" id="P87323">
    <property type="interactions" value="2"/>
</dbReference>
<dbReference type="STRING" id="284812.P87323"/>
<dbReference type="iPTMnet" id="P87323"/>
<dbReference type="PaxDb" id="4896-SPBC887.10.1"/>
<dbReference type="EnsemblFungi" id="SPBC887.10.1">
    <property type="protein sequence ID" value="SPBC887.10.1:pep"/>
    <property type="gene ID" value="SPBC887.10"/>
</dbReference>
<dbReference type="GeneID" id="2541209"/>
<dbReference type="KEGG" id="spo:2541209"/>
<dbReference type="PomBase" id="SPBC887.10">
    <property type="gene designation" value="mcs4"/>
</dbReference>
<dbReference type="VEuPathDB" id="FungiDB:SPBC887.10"/>
<dbReference type="eggNOG" id="KOG0519">
    <property type="taxonomic scope" value="Eukaryota"/>
</dbReference>
<dbReference type="HOGENOM" id="CLU_008307_4_1_1"/>
<dbReference type="InParanoid" id="P87323"/>
<dbReference type="OMA" id="QALIDWN"/>
<dbReference type="PhylomeDB" id="P87323"/>
<dbReference type="PRO" id="PR:P87323"/>
<dbReference type="Proteomes" id="UP000002485">
    <property type="component" value="Chromosome II"/>
</dbReference>
<dbReference type="GO" id="GO:0032153">
    <property type="term" value="C:cell division site"/>
    <property type="evidence" value="ECO:0007005"/>
    <property type="project" value="PomBase"/>
</dbReference>
<dbReference type="GO" id="GO:0005737">
    <property type="term" value="C:cytoplasm"/>
    <property type="evidence" value="ECO:0000314"/>
    <property type="project" value="PomBase"/>
</dbReference>
<dbReference type="GO" id="GO:1990315">
    <property type="term" value="C:Mcs4 RR-MAPKKK complex"/>
    <property type="evidence" value="ECO:0000314"/>
    <property type="project" value="PomBase"/>
</dbReference>
<dbReference type="GO" id="GO:0000156">
    <property type="term" value="F:phosphorelay response regulator activity"/>
    <property type="evidence" value="ECO:0000353"/>
    <property type="project" value="PomBase"/>
</dbReference>
<dbReference type="GO" id="GO:0030295">
    <property type="term" value="F:protein kinase activator activity"/>
    <property type="evidence" value="ECO:0000269"/>
    <property type="project" value="PomBase"/>
</dbReference>
<dbReference type="GO" id="GO:0010972">
    <property type="term" value="P:negative regulation of G2/M transition of mitotic cell cycle"/>
    <property type="evidence" value="ECO:0000314"/>
    <property type="project" value="PomBase"/>
</dbReference>
<dbReference type="GO" id="GO:0000160">
    <property type="term" value="P:phosphorelay signal transduction system"/>
    <property type="evidence" value="ECO:0000314"/>
    <property type="project" value="PomBase"/>
</dbReference>
<dbReference type="GO" id="GO:1900745">
    <property type="term" value="P:positive regulation of p38MAPK cascade"/>
    <property type="evidence" value="ECO:0000315"/>
    <property type="project" value="PomBase"/>
</dbReference>
<dbReference type="CDD" id="cd17546">
    <property type="entry name" value="REC_hyHK_CKI1_RcsC-like"/>
    <property type="match status" value="1"/>
</dbReference>
<dbReference type="FunFam" id="3.40.50.2300:FF:000146">
    <property type="entry name" value="Putative two-component response regulator SSK1p"/>
    <property type="match status" value="1"/>
</dbReference>
<dbReference type="Gene3D" id="3.40.50.2300">
    <property type="match status" value="1"/>
</dbReference>
<dbReference type="InterPro" id="IPR011006">
    <property type="entry name" value="CheY-like_superfamily"/>
</dbReference>
<dbReference type="InterPro" id="IPR001789">
    <property type="entry name" value="Sig_transdc_resp-reg_receiver"/>
</dbReference>
<dbReference type="PANTHER" id="PTHR45339">
    <property type="entry name" value="HYBRID SIGNAL TRANSDUCTION HISTIDINE KINASE J"/>
    <property type="match status" value="1"/>
</dbReference>
<dbReference type="PANTHER" id="PTHR45339:SF1">
    <property type="entry name" value="HYBRID SIGNAL TRANSDUCTION HISTIDINE KINASE J"/>
    <property type="match status" value="1"/>
</dbReference>
<dbReference type="Pfam" id="PF00072">
    <property type="entry name" value="Response_reg"/>
    <property type="match status" value="1"/>
</dbReference>
<dbReference type="SMART" id="SM00448">
    <property type="entry name" value="REC"/>
    <property type="match status" value="1"/>
</dbReference>
<dbReference type="SUPFAM" id="SSF52172">
    <property type="entry name" value="CheY-like"/>
    <property type="match status" value="1"/>
</dbReference>
<dbReference type="PROSITE" id="PS50110">
    <property type="entry name" value="RESPONSE_REGULATORY"/>
    <property type="match status" value="1"/>
</dbReference>
<accession>P87323</accession>
<accession>Q9UTZ6</accession>
<organism>
    <name type="scientific">Schizosaccharomyces pombe (strain 972 / ATCC 24843)</name>
    <name type="common">Fission yeast</name>
    <dbReference type="NCBI Taxonomy" id="284812"/>
    <lineage>
        <taxon>Eukaryota</taxon>
        <taxon>Fungi</taxon>
        <taxon>Dikarya</taxon>
        <taxon>Ascomycota</taxon>
        <taxon>Taphrinomycotina</taxon>
        <taxon>Schizosaccharomycetes</taxon>
        <taxon>Schizosaccharomycetales</taxon>
        <taxon>Schizosaccharomycetaceae</taxon>
        <taxon>Schizosaccharomyces</taxon>
    </lineage>
</organism>
<comment type="function">
    <text>Response regulator that coordinately controls the stress activated wak1-wis1-sty1 MAP kinase pathway and fission yeast cell cycle.</text>
</comment>
<comment type="subcellular location">
    <subcellularLocation>
        <location evidence="3">Cytoplasm</location>
    </subcellularLocation>
</comment>
<proteinExistence type="predicted"/>
<protein>
    <recommendedName>
        <fullName>Response regulator mcs4</fullName>
    </recommendedName>
    <alternativeName>
        <fullName>Mitotic catastrophe suppressor 4</fullName>
    </alternativeName>
</protein>
<evidence type="ECO:0000255" key="1">
    <source>
        <dbReference type="PROSITE-ProRule" id="PRU00169"/>
    </source>
</evidence>
<evidence type="ECO:0000256" key="2">
    <source>
        <dbReference type="SAM" id="MobiDB-lite"/>
    </source>
</evidence>
<evidence type="ECO:0000269" key="3">
    <source>
    </source>
</evidence>
<evidence type="ECO:0000305" key="4"/>
<gene>
    <name type="primary">mcs4</name>
    <name type="ORF">SPBC887.10</name>
</gene>